<dbReference type="EMBL" id="AE017197">
    <property type="protein sequence ID" value="AAU03657.1"/>
    <property type="molecule type" value="Genomic_DNA"/>
</dbReference>
<dbReference type="RefSeq" id="WP_011190644.1">
    <property type="nucleotide sequence ID" value="NC_006142.1"/>
</dbReference>
<dbReference type="SMR" id="Q68XI5"/>
<dbReference type="KEGG" id="rty:RT0173"/>
<dbReference type="eggNOG" id="COG0497">
    <property type="taxonomic scope" value="Bacteria"/>
</dbReference>
<dbReference type="HOGENOM" id="CLU_018297_3_1_5"/>
<dbReference type="OrthoDB" id="9806954at2"/>
<dbReference type="Proteomes" id="UP000000604">
    <property type="component" value="Chromosome"/>
</dbReference>
<dbReference type="GO" id="GO:0043590">
    <property type="term" value="C:bacterial nucleoid"/>
    <property type="evidence" value="ECO:0007669"/>
    <property type="project" value="TreeGrafter"/>
</dbReference>
<dbReference type="GO" id="GO:0005524">
    <property type="term" value="F:ATP binding"/>
    <property type="evidence" value="ECO:0007669"/>
    <property type="project" value="UniProtKB-KW"/>
</dbReference>
<dbReference type="GO" id="GO:0006310">
    <property type="term" value="P:DNA recombination"/>
    <property type="evidence" value="ECO:0007669"/>
    <property type="project" value="InterPro"/>
</dbReference>
<dbReference type="GO" id="GO:0006281">
    <property type="term" value="P:DNA repair"/>
    <property type="evidence" value="ECO:0007669"/>
    <property type="project" value="UniProtKB-KW"/>
</dbReference>
<dbReference type="GO" id="GO:0009432">
    <property type="term" value="P:SOS response"/>
    <property type="evidence" value="ECO:0007669"/>
    <property type="project" value="TreeGrafter"/>
</dbReference>
<dbReference type="CDD" id="cd03241">
    <property type="entry name" value="ABC_RecN"/>
    <property type="match status" value="2"/>
</dbReference>
<dbReference type="Gene3D" id="3.40.50.300">
    <property type="entry name" value="P-loop containing nucleotide triphosphate hydrolases"/>
    <property type="match status" value="2"/>
</dbReference>
<dbReference type="InterPro" id="IPR004604">
    <property type="entry name" value="DNA_recomb/repair_RecN"/>
</dbReference>
<dbReference type="InterPro" id="IPR027417">
    <property type="entry name" value="P-loop_NTPase"/>
</dbReference>
<dbReference type="InterPro" id="IPR003395">
    <property type="entry name" value="RecF/RecN/SMC_N"/>
</dbReference>
<dbReference type="NCBIfam" id="TIGR00634">
    <property type="entry name" value="recN"/>
    <property type="match status" value="1"/>
</dbReference>
<dbReference type="PANTHER" id="PTHR11059">
    <property type="entry name" value="DNA REPAIR PROTEIN RECN"/>
    <property type="match status" value="1"/>
</dbReference>
<dbReference type="PANTHER" id="PTHR11059:SF0">
    <property type="entry name" value="DNA REPAIR PROTEIN RECN"/>
    <property type="match status" value="1"/>
</dbReference>
<dbReference type="Pfam" id="PF02463">
    <property type="entry name" value="SMC_N"/>
    <property type="match status" value="1"/>
</dbReference>
<dbReference type="PIRSF" id="PIRSF003128">
    <property type="entry name" value="RecN"/>
    <property type="match status" value="1"/>
</dbReference>
<dbReference type="SUPFAM" id="SSF52540">
    <property type="entry name" value="P-loop containing nucleoside triphosphate hydrolases"/>
    <property type="match status" value="2"/>
</dbReference>
<name>RECN_RICTY</name>
<protein>
    <recommendedName>
        <fullName>DNA repair protein RecN</fullName>
    </recommendedName>
    <alternativeName>
        <fullName>Recombination protein N</fullName>
    </alternativeName>
</protein>
<evidence type="ECO:0000250" key="1"/>
<evidence type="ECO:0000255" key="2"/>
<evidence type="ECO:0000305" key="3"/>
<feature type="chain" id="PRO_0000286657" description="DNA repair protein RecN">
    <location>
        <begin position="1"/>
        <end position="554"/>
    </location>
</feature>
<feature type="binding site" evidence="2">
    <location>
        <begin position="29"/>
        <end position="36"/>
    </location>
    <ligand>
        <name>ATP</name>
        <dbReference type="ChEBI" id="CHEBI:30616"/>
    </ligand>
</feature>
<comment type="function">
    <text evidence="1">May be involved in recombinational repair of damaged DNA.</text>
</comment>
<comment type="similarity">
    <text evidence="3">Belongs to the RecN family.</text>
</comment>
<keyword id="KW-0067">ATP-binding</keyword>
<keyword id="KW-0227">DNA damage</keyword>
<keyword id="KW-0234">DNA repair</keyword>
<keyword id="KW-0547">Nucleotide-binding</keyword>
<sequence>MFYSLSVKNFILIDELEIEFNKGLCVITGETGAGKSILLDAILFCLGYKTSNNVIKHGKDYTVVNIIFSLNDEIKKFLIQNFIEPEELLLVKCLQKVEGRKNFFINNQIVTKTLMKQLANYLFELHGQNNNITLLEASTQRDILDSYGNLLEFRVQLAKCYQIWQNTRKEIEEITVKQNEIEQEIDYLSFVTEELTKLNIQIGEEETLTNIRKDLQNKGKNLQLIRDIIAEINNPEINISINRACKLLARQDYNDRFNAVVTSLEEAYNNLEVARQELSNILGSFTYEEYNLEETEERLFLIKAISRKYNVPANELGIFLDKSLEQLGILKNKIANSNKLQAQEVLLQEQYYKLASDLSAKRLIAAKHLEESLNQELKQLKMENANFKIEVKTRIDPTASGNDDIVFKASTNPGMKIEAINKIASGGELSRFMLALKTSLFDKMIKPSIIFDEIDVGIAGEAADKIGDRLKKLSSVTQVIVITHQPQVAGKADLHIKIEKTQLEQETKVKVKALNLAERQTELARMISGKTITAASLKVAKELLHPVAFSHDQK</sequence>
<accession>Q68XI5</accession>
<proteinExistence type="inferred from homology"/>
<reference key="1">
    <citation type="journal article" date="2004" name="J. Bacteriol.">
        <title>Complete genome sequence of Rickettsia typhi and comparison with sequences of other Rickettsiae.</title>
        <authorList>
            <person name="McLeod M.P."/>
            <person name="Qin X."/>
            <person name="Karpathy S.E."/>
            <person name="Gioia J."/>
            <person name="Highlander S.K."/>
            <person name="Fox G.E."/>
            <person name="McNeill T.Z."/>
            <person name="Jiang H."/>
            <person name="Muzny D."/>
            <person name="Jacob L.S."/>
            <person name="Hawes A.C."/>
            <person name="Sodergren E."/>
            <person name="Gill R."/>
            <person name="Hume J."/>
            <person name="Morgan M."/>
            <person name="Fan G."/>
            <person name="Amin A.G."/>
            <person name="Gibbs R.A."/>
            <person name="Hong C."/>
            <person name="Yu X.-J."/>
            <person name="Walker D.H."/>
            <person name="Weinstock G.M."/>
        </authorList>
    </citation>
    <scope>NUCLEOTIDE SEQUENCE [LARGE SCALE GENOMIC DNA]</scope>
    <source>
        <strain>ATCC VR-144 / Wilmington</strain>
    </source>
</reference>
<organism>
    <name type="scientific">Rickettsia typhi (strain ATCC VR-144 / Wilmington)</name>
    <dbReference type="NCBI Taxonomy" id="257363"/>
    <lineage>
        <taxon>Bacteria</taxon>
        <taxon>Pseudomonadati</taxon>
        <taxon>Pseudomonadota</taxon>
        <taxon>Alphaproteobacteria</taxon>
        <taxon>Rickettsiales</taxon>
        <taxon>Rickettsiaceae</taxon>
        <taxon>Rickettsieae</taxon>
        <taxon>Rickettsia</taxon>
        <taxon>typhus group</taxon>
    </lineage>
</organism>
<gene>
    <name type="primary">recN</name>
    <name type="ordered locus">RT0173</name>
</gene>